<proteinExistence type="inferred from homology"/>
<protein>
    <recommendedName>
        <fullName evidence="1">Thymidylate synthase</fullName>
        <shortName evidence="1">TS</shortName>
        <shortName evidence="1">TSase</shortName>
        <ecNumber evidence="1">2.1.1.45</ecNumber>
    </recommendedName>
</protein>
<name>TYSY_XYLFT</name>
<sequence>MKQYLELLNDVLVHGIKKPDRTGTGTRSVFGWQMRFDLSQGFPLVTTKKLHLRSIIHELLWFLRGETNIAYLKKHQVHIWDEWADATGELGPVYGKQWRRWAGADGHEIDQIRWLVEEIKRNPDSRRLVISAWNVADLPQMALVPCHALFQFYVANGKLSCQLYQRSADIFLGVPFNIASYALLTHMLAQVTGLVVGDFVHTLGDAHLYANHVEQASVQLGRVPRPQPVLRLNQAVTDLFDFTYDDIVIEGYDPYPAIKAPVAV</sequence>
<organism>
    <name type="scientific">Xylella fastidiosa (strain Temecula1 / ATCC 700964)</name>
    <dbReference type="NCBI Taxonomy" id="183190"/>
    <lineage>
        <taxon>Bacteria</taxon>
        <taxon>Pseudomonadati</taxon>
        <taxon>Pseudomonadota</taxon>
        <taxon>Gammaproteobacteria</taxon>
        <taxon>Lysobacterales</taxon>
        <taxon>Lysobacteraceae</taxon>
        <taxon>Xylella</taxon>
    </lineage>
</organism>
<accession>Q87BT4</accession>
<gene>
    <name evidence="1" type="primary">thyA</name>
    <name type="ordered locus">PD_1364</name>
</gene>
<reference key="1">
    <citation type="journal article" date="2003" name="J. Bacteriol.">
        <title>Comparative analyses of the complete genome sequences of Pierce's disease and citrus variegated chlorosis strains of Xylella fastidiosa.</title>
        <authorList>
            <person name="Van Sluys M.A."/>
            <person name="de Oliveira M.C."/>
            <person name="Monteiro-Vitorello C.B."/>
            <person name="Miyaki C.Y."/>
            <person name="Furlan L.R."/>
            <person name="Camargo L.E.A."/>
            <person name="da Silva A.C.R."/>
            <person name="Moon D.H."/>
            <person name="Takita M.A."/>
            <person name="Lemos E.G.M."/>
            <person name="Machado M.A."/>
            <person name="Ferro M.I.T."/>
            <person name="da Silva F.R."/>
            <person name="Goldman M.H.S."/>
            <person name="Goldman G.H."/>
            <person name="Lemos M.V.F."/>
            <person name="El-Dorry H."/>
            <person name="Tsai S.M."/>
            <person name="Carrer H."/>
            <person name="Carraro D.M."/>
            <person name="de Oliveira R.C."/>
            <person name="Nunes L.R."/>
            <person name="Siqueira W.J."/>
            <person name="Coutinho L.L."/>
            <person name="Kimura E.T."/>
            <person name="Ferro E.S."/>
            <person name="Harakava R."/>
            <person name="Kuramae E.E."/>
            <person name="Marino C.L."/>
            <person name="Giglioti E."/>
            <person name="Abreu I.L."/>
            <person name="Alves L.M.C."/>
            <person name="do Amaral A.M."/>
            <person name="Baia G.S."/>
            <person name="Blanco S.R."/>
            <person name="Brito M.S."/>
            <person name="Cannavan F.S."/>
            <person name="Celestino A.V."/>
            <person name="da Cunha A.F."/>
            <person name="Fenille R.C."/>
            <person name="Ferro J.A."/>
            <person name="Formighieri E.F."/>
            <person name="Kishi L.T."/>
            <person name="Leoni S.G."/>
            <person name="Oliveira A.R."/>
            <person name="Rosa V.E. Jr."/>
            <person name="Sassaki F.T."/>
            <person name="Sena J.A.D."/>
            <person name="de Souza A.A."/>
            <person name="Truffi D."/>
            <person name="Tsukumo F."/>
            <person name="Yanai G.M."/>
            <person name="Zaros L.G."/>
            <person name="Civerolo E.L."/>
            <person name="Simpson A.J.G."/>
            <person name="Almeida N.F. Jr."/>
            <person name="Setubal J.C."/>
            <person name="Kitajima J.P."/>
        </authorList>
    </citation>
    <scope>NUCLEOTIDE SEQUENCE [LARGE SCALE GENOMIC DNA]</scope>
    <source>
        <strain>Temecula1 / ATCC 700964</strain>
    </source>
</reference>
<feature type="chain" id="PRO_0000141050" description="Thymidylate synthase">
    <location>
        <begin position="1"/>
        <end position="264"/>
    </location>
</feature>
<feature type="active site" description="Nucleophile" evidence="1">
    <location>
        <position position="146"/>
    </location>
</feature>
<feature type="binding site" description="in other chain" evidence="1">
    <location>
        <position position="21"/>
    </location>
    <ligand>
        <name>dUMP</name>
        <dbReference type="ChEBI" id="CHEBI:246422"/>
        <note>ligand shared between dimeric partners</note>
    </ligand>
</feature>
<feature type="binding site" evidence="1">
    <location>
        <position position="51"/>
    </location>
    <ligand>
        <name>(6R)-5,10-methylene-5,6,7,8-tetrahydrofolate</name>
        <dbReference type="ChEBI" id="CHEBI:15636"/>
    </ligand>
</feature>
<feature type="binding site" evidence="1">
    <location>
        <begin position="126"/>
        <end position="127"/>
    </location>
    <ligand>
        <name>dUMP</name>
        <dbReference type="ChEBI" id="CHEBI:246422"/>
        <note>ligand shared between dimeric partners</note>
    </ligand>
</feature>
<feature type="binding site" description="in other chain" evidence="1">
    <location>
        <begin position="166"/>
        <end position="169"/>
    </location>
    <ligand>
        <name>dUMP</name>
        <dbReference type="ChEBI" id="CHEBI:246422"/>
        <note>ligand shared between dimeric partners</note>
    </ligand>
</feature>
<feature type="binding site" evidence="1">
    <location>
        <position position="169"/>
    </location>
    <ligand>
        <name>(6R)-5,10-methylene-5,6,7,8-tetrahydrofolate</name>
        <dbReference type="ChEBI" id="CHEBI:15636"/>
    </ligand>
</feature>
<feature type="binding site" description="in other chain" evidence="1">
    <location>
        <position position="177"/>
    </location>
    <ligand>
        <name>dUMP</name>
        <dbReference type="ChEBI" id="CHEBI:246422"/>
        <note>ligand shared between dimeric partners</note>
    </ligand>
</feature>
<feature type="binding site" description="in other chain" evidence="1">
    <location>
        <begin position="207"/>
        <end position="209"/>
    </location>
    <ligand>
        <name>dUMP</name>
        <dbReference type="ChEBI" id="CHEBI:246422"/>
        <note>ligand shared between dimeric partners</note>
    </ligand>
</feature>
<feature type="binding site" evidence="1">
    <location>
        <position position="263"/>
    </location>
    <ligand>
        <name>(6R)-5,10-methylene-5,6,7,8-tetrahydrofolate</name>
        <dbReference type="ChEBI" id="CHEBI:15636"/>
    </ligand>
</feature>
<evidence type="ECO:0000255" key="1">
    <source>
        <dbReference type="HAMAP-Rule" id="MF_00008"/>
    </source>
</evidence>
<comment type="function">
    <text evidence="1">Catalyzes the reductive methylation of 2'-deoxyuridine-5'-monophosphate (dUMP) to 2'-deoxythymidine-5'-monophosphate (dTMP) while utilizing 5,10-methylenetetrahydrofolate (mTHF) as the methyl donor and reductant in the reaction, yielding dihydrofolate (DHF) as a by-product. This enzymatic reaction provides an intracellular de novo source of dTMP, an essential precursor for DNA biosynthesis.</text>
</comment>
<comment type="catalytic activity">
    <reaction evidence="1">
        <text>dUMP + (6R)-5,10-methylene-5,6,7,8-tetrahydrofolate = 7,8-dihydrofolate + dTMP</text>
        <dbReference type="Rhea" id="RHEA:12104"/>
        <dbReference type="ChEBI" id="CHEBI:15636"/>
        <dbReference type="ChEBI" id="CHEBI:57451"/>
        <dbReference type="ChEBI" id="CHEBI:63528"/>
        <dbReference type="ChEBI" id="CHEBI:246422"/>
        <dbReference type="EC" id="2.1.1.45"/>
    </reaction>
</comment>
<comment type="pathway">
    <text evidence="1">Pyrimidine metabolism; dTTP biosynthesis.</text>
</comment>
<comment type="subunit">
    <text evidence="1">Homodimer.</text>
</comment>
<comment type="subcellular location">
    <subcellularLocation>
        <location evidence="1">Cytoplasm</location>
    </subcellularLocation>
</comment>
<comment type="similarity">
    <text evidence="1">Belongs to the thymidylate synthase family. Bacterial-type ThyA subfamily.</text>
</comment>
<dbReference type="EC" id="2.1.1.45" evidence="1"/>
<dbReference type="EMBL" id="AE009442">
    <property type="protein sequence ID" value="AAO29211.1"/>
    <property type="molecule type" value="Genomic_DNA"/>
</dbReference>
<dbReference type="RefSeq" id="WP_011098074.1">
    <property type="nucleotide sequence ID" value="NC_004556.1"/>
</dbReference>
<dbReference type="SMR" id="Q87BT4"/>
<dbReference type="KEGG" id="xft:PD_1364"/>
<dbReference type="HOGENOM" id="CLU_021669_0_0_6"/>
<dbReference type="UniPathway" id="UPA00575"/>
<dbReference type="Proteomes" id="UP000002516">
    <property type="component" value="Chromosome"/>
</dbReference>
<dbReference type="GO" id="GO:0005829">
    <property type="term" value="C:cytosol"/>
    <property type="evidence" value="ECO:0007669"/>
    <property type="project" value="TreeGrafter"/>
</dbReference>
<dbReference type="GO" id="GO:0004799">
    <property type="term" value="F:thymidylate synthase activity"/>
    <property type="evidence" value="ECO:0007669"/>
    <property type="project" value="UniProtKB-UniRule"/>
</dbReference>
<dbReference type="GO" id="GO:0006231">
    <property type="term" value="P:dTMP biosynthetic process"/>
    <property type="evidence" value="ECO:0007669"/>
    <property type="project" value="UniProtKB-UniRule"/>
</dbReference>
<dbReference type="GO" id="GO:0006235">
    <property type="term" value="P:dTTP biosynthetic process"/>
    <property type="evidence" value="ECO:0007669"/>
    <property type="project" value="UniProtKB-UniRule"/>
</dbReference>
<dbReference type="GO" id="GO:0032259">
    <property type="term" value="P:methylation"/>
    <property type="evidence" value="ECO:0007669"/>
    <property type="project" value="UniProtKB-KW"/>
</dbReference>
<dbReference type="CDD" id="cd00351">
    <property type="entry name" value="TS_Pyrimidine_HMase"/>
    <property type="match status" value="1"/>
</dbReference>
<dbReference type="FunFam" id="3.30.572.10:FF:000001">
    <property type="entry name" value="Thymidylate synthase"/>
    <property type="match status" value="1"/>
</dbReference>
<dbReference type="Gene3D" id="3.30.572.10">
    <property type="entry name" value="Thymidylate synthase/dCMP hydroxymethylase domain"/>
    <property type="match status" value="1"/>
</dbReference>
<dbReference type="HAMAP" id="MF_00008">
    <property type="entry name" value="Thymidy_synth_bact"/>
    <property type="match status" value="1"/>
</dbReference>
<dbReference type="InterPro" id="IPR045097">
    <property type="entry name" value="Thymidate_synth/dCMP_Mease"/>
</dbReference>
<dbReference type="InterPro" id="IPR023451">
    <property type="entry name" value="Thymidate_synth/dCMP_Mease_dom"/>
</dbReference>
<dbReference type="InterPro" id="IPR036926">
    <property type="entry name" value="Thymidate_synth/dCMP_Mease_sf"/>
</dbReference>
<dbReference type="InterPro" id="IPR000398">
    <property type="entry name" value="Thymidylate_synthase"/>
</dbReference>
<dbReference type="InterPro" id="IPR020940">
    <property type="entry name" value="Thymidylate_synthase_AS"/>
</dbReference>
<dbReference type="NCBIfam" id="NF002497">
    <property type="entry name" value="PRK01827.1-3"/>
    <property type="match status" value="1"/>
</dbReference>
<dbReference type="NCBIfam" id="NF002499">
    <property type="entry name" value="PRK01827.1-5"/>
    <property type="match status" value="1"/>
</dbReference>
<dbReference type="NCBIfam" id="TIGR03284">
    <property type="entry name" value="thym_sym"/>
    <property type="match status" value="2"/>
</dbReference>
<dbReference type="PANTHER" id="PTHR11548:SF9">
    <property type="entry name" value="THYMIDYLATE SYNTHASE"/>
    <property type="match status" value="1"/>
</dbReference>
<dbReference type="PANTHER" id="PTHR11548">
    <property type="entry name" value="THYMIDYLATE SYNTHASE 1"/>
    <property type="match status" value="1"/>
</dbReference>
<dbReference type="Pfam" id="PF00303">
    <property type="entry name" value="Thymidylat_synt"/>
    <property type="match status" value="1"/>
</dbReference>
<dbReference type="PRINTS" id="PR00108">
    <property type="entry name" value="THYMDSNTHASE"/>
</dbReference>
<dbReference type="SUPFAM" id="SSF55831">
    <property type="entry name" value="Thymidylate synthase/dCMP hydroxymethylase"/>
    <property type="match status" value="1"/>
</dbReference>
<dbReference type="PROSITE" id="PS00091">
    <property type="entry name" value="THYMIDYLATE_SYNTHASE"/>
    <property type="match status" value="1"/>
</dbReference>
<keyword id="KW-0963">Cytoplasm</keyword>
<keyword id="KW-0489">Methyltransferase</keyword>
<keyword id="KW-0545">Nucleotide biosynthesis</keyword>
<keyword id="KW-1185">Reference proteome</keyword>
<keyword id="KW-0808">Transferase</keyword>